<accession>Q4PHZ2</accession>
<accession>A0A0D1CFQ9</accession>
<feature type="chain" id="PRO_0000317972" description="Putative lipase ATG15">
    <location>
        <begin position="1"/>
        <end position="517"/>
    </location>
</feature>
<feature type="topological domain" description="Cytoplasmic" evidence="1">
    <location>
        <begin position="1"/>
        <end position="6"/>
    </location>
</feature>
<feature type="transmembrane region" description="Helical; Signal-anchor for type II membrane protein">
    <location>
        <begin position="7"/>
        <end position="27"/>
    </location>
</feature>
<feature type="topological domain" description="Lumenal" evidence="1">
    <location>
        <begin position="28"/>
        <end position="517"/>
    </location>
</feature>
<feature type="region of interest" description="Disordered" evidence="5">
    <location>
        <begin position="466"/>
        <end position="499"/>
    </location>
</feature>
<feature type="compositionally biased region" description="Acidic residues" evidence="5">
    <location>
        <begin position="477"/>
        <end position="491"/>
    </location>
</feature>
<feature type="active site" description="Charge relay system" evidence="4">
    <location>
        <position position="319"/>
    </location>
</feature>
<feature type="glycosylation site" description="N-linked (GlcNAc...) asparagine" evidence="3">
    <location>
        <position position="187"/>
    </location>
</feature>
<feature type="glycosylation site" description="N-linked (GlcNAc...) asparagine" evidence="3">
    <location>
        <position position="221"/>
    </location>
</feature>
<feature type="glycosylation site" description="N-linked (GlcNAc...) asparagine" evidence="3">
    <location>
        <position position="303"/>
    </location>
</feature>
<proteinExistence type="inferred from homology"/>
<reference key="1">
    <citation type="journal article" date="2006" name="Nature">
        <title>Insights from the genome of the biotrophic fungal plant pathogen Ustilago maydis.</title>
        <authorList>
            <person name="Kaemper J."/>
            <person name="Kahmann R."/>
            <person name="Boelker M."/>
            <person name="Ma L.-J."/>
            <person name="Brefort T."/>
            <person name="Saville B.J."/>
            <person name="Banuett F."/>
            <person name="Kronstad J.W."/>
            <person name="Gold S.E."/>
            <person name="Mueller O."/>
            <person name="Perlin M.H."/>
            <person name="Woesten H.A.B."/>
            <person name="de Vries R."/>
            <person name="Ruiz-Herrera J."/>
            <person name="Reynaga-Pena C.G."/>
            <person name="Snetselaar K."/>
            <person name="McCann M."/>
            <person name="Perez-Martin J."/>
            <person name="Feldbruegge M."/>
            <person name="Basse C.W."/>
            <person name="Steinberg G."/>
            <person name="Ibeas J.I."/>
            <person name="Holloman W."/>
            <person name="Guzman P."/>
            <person name="Farman M.L."/>
            <person name="Stajich J.E."/>
            <person name="Sentandreu R."/>
            <person name="Gonzalez-Prieto J.M."/>
            <person name="Kennell J.C."/>
            <person name="Molina L."/>
            <person name="Schirawski J."/>
            <person name="Mendoza-Mendoza A."/>
            <person name="Greilinger D."/>
            <person name="Muench K."/>
            <person name="Roessel N."/>
            <person name="Scherer M."/>
            <person name="Vranes M."/>
            <person name="Ladendorf O."/>
            <person name="Vincon V."/>
            <person name="Fuchs U."/>
            <person name="Sandrock B."/>
            <person name="Meng S."/>
            <person name="Ho E.C.H."/>
            <person name="Cahill M.J."/>
            <person name="Boyce K.J."/>
            <person name="Klose J."/>
            <person name="Klosterman S.J."/>
            <person name="Deelstra H.J."/>
            <person name="Ortiz-Castellanos L."/>
            <person name="Li W."/>
            <person name="Sanchez-Alonso P."/>
            <person name="Schreier P.H."/>
            <person name="Haeuser-Hahn I."/>
            <person name="Vaupel M."/>
            <person name="Koopmann E."/>
            <person name="Friedrich G."/>
            <person name="Voss H."/>
            <person name="Schlueter T."/>
            <person name="Margolis J."/>
            <person name="Platt D."/>
            <person name="Swimmer C."/>
            <person name="Gnirke A."/>
            <person name="Chen F."/>
            <person name="Vysotskaia V."/>
            <person name="Mannhaupt G."/>
            <person name="Gueldener U."/>
            <person name="Muensterkoetter M."/>
            <person name="Haase D."/>
            <person name="Oesterheld M."/>
            <person name="Mewes H.-W."/>
            <person name="Mauceli E.W."/>
            <person name="DeCaprio D."/>
            <person name="Wade C.M."/>
            <person name="Butler J."/>
            <person name="Young S.K."/>
            <person name="Jaffe D.B."/>
            <person name="Calvo S.E."/>
            <person name="Nusbaum C."/>
            <person name="Galagan J.E."/>
            <person name="Birren B.W."/>
        </authorList>
    </citation>
    <scope>NUCLEOTIDE SEQUENCE [LARGE SCALE GENOMIC DNA]</scope>
    <source>
        <strain>DSM 14603 / FGSC 9021 / UM521</strain>
    </source>
</reference>
<reference key="2">
    <citation type="submission" date="2014-09" db="EMBL/GenBank/DDBJ databases">
        <authorList>
            <person name="Gueldener U."/>
            <person name="Muensterkoetter M."/>
            <person name="Walter M.C."/>
            <person name="Mannhaupt G."/>
            <person name="Kahmann R."/>
        </authorList>
    </citation>
    <scope>GENOME REANNOTATION</scope>
    <source>
        <strain>DSM 14603 / FGSC 9021 / UM521</strain>
    </source>
</reference>
<protein>
    <recommendedName>
        <fullName>Putative lipase ATG15</fullName>
        <ecNumber>3.1.1.3</ecNumber>
    </recommendedName>
    <alternativeName>
        <fullName>Autophagy-related protein 15</fullName>
    </alternativeName>
</protein>
<sequence length="517" mass="57019">MRASTHSWLLLVVVLSLSSFTVNAVILEGLIPPRSHLAPSTFQQPFALSSYLQKLFGTSLRALYGAEQNRQTSVKTFGLREAYHQGIGDKAHERARATFDFRITANDVQADQANIDFIPAIRTVRQRITRAKDPKKYVEVRGQSYRDAMCAASTELDWEDVDVEAPDVTERTTVLAFAKMASAAYKNDTSDWDGIGGFDPTNSFGWEGDGIRGHIFTTHDNDTIVVALKGTSNVFLGGGDTARRDKTNDNLLFSCCCARVSWSWSTVCDCYQGHGDQCGQTCVERALIEKSLYYPAITDLFNNVSYAYPDSQIWITGHSLGGALSSLLGMTFGVPTVTFQAPGERMAAMRLHLPLPPAKHADESPVAALPIVHVYNNADPIATGTCNGAASVCSNFGYAMESKCHSGKSIVYDTVGKLGWSMTINAHRINTLVDDVLTEDWSEKVRKKKAKLRSIGSRGGQISTRGWRWPWHRGDSADDDGDSDEDTDEDDKLAVPKARSEERCQDCTNWHFTDETL</sequence>
<organism>
    <name type="scientific">Mycosarcoma maydis</name>
    <name type="common">Corn smut fungus</name>
    <name type="synonym">Ustilago maydis</name>
    <dbReference type="NCBI Taxonomy" id="5270"/>
    <lineage>
        <taxon>Eukaryota</taxon>
        <taxon>Fungi</taxon>
        <taxon>Dikarya</taxon>
        <taxon>Basidiomycota</taxon>
        <taxon>Ustilaginomycotina</taxon>
        <taxon>Ustilaginomycetes</taxon>
        <taxon>Ustilaginales</taxon>
        <taxon>Ustilaginaceae</taxon>
        <taxon>Mycosarcoma</taxon>
    </lineage>
</organism>
<name>ATG15_MYCMD</name>
<comment type="function">
    <text evidence="1">Lipase which is essential for lysis of subvacuolar cytoplasm to vacuole targeted bodies and intravacuolar autophagic bodies. Involved in the lysis of intravacuolar multivesicular body (MVB) vesicles. The intravacuolar membrane disintegration by ATG15 is critical to life span extension (By similarity).</text>
</comment>
<comment type="catalytic activity">
    <reaction>
        <text>a triacylglycerol + H2O = a diacylglycerol + a fatty acid + H(+)</text>
        <dbReference type="Rhea" id="RHEA:12044"/>
        <dbReference type="ChEBI" id="CHEBI:15377"/>
        <dbReference type="ChEBI" id="CHEBI:15378"/>
        <dbReference type="ChEBI" id="CHEBI:17855"/>
        <dbReference type="ChEBI" id="CHEBI:18035"/>
        <dbReference type="ChEBI" id="CHEBI:28868"/>
        <dbReference type="EC" id="3.1.1.3"/>
    </reaction>
</comment>
<comment type="subunit">
    <text evidence="1">Binds to both phosphatidylinositol (PI) and phosphatidylinositol 3,5-bisphosphate (PIP2).</text>
</comment>
<comment type="subcellular location">
    <subcellularLocation>
        <location evidence="2">Endosome</location>
        <location evidence="2">Multivesicular body membrane</location>
        <topology evidence="2">Single-pass type II membrane protein</topology>
    </subcellularLocation>
    <subcellularLocation>
        <location evidence="2">Prevacuolar compartment membrane</location>
        <topology evidence="2">Single-pass type II membrane protein</topology>
    </subcellularLocation>
    <text evidence="2">From ER, targeted to vacuolar lumen at the MVB vesicles via the Golgi and the prevacuolar compartment (PVC).</text>
</comment>
<comment type="similarity">
    <text evidence="6">Belongs to the AB hydrolase superfamily. Lipase family.</text>
</comment>
<keyword id="KW-0072">Autophagy</keyword>
<keyword id="KW-0967">Endosome</keyword>
<keyword id="KW-0325">Glycoprotein</keyword>
<keyword id="KW-0378">Hydrolase</keyword>
<keyword id="KW-0442">Lipid degradation</keyword>
<keyword id="KW-0443">Lipid metabolism</keyword>
<keyword id="KW-0472">Membrane</keyword>
<keyword id="KW-1185">Reference proteome</keyword>
<keyword id="KW-0735">Signal-anchor</keyword>
<keyword id="KW-0812">Transmembrane</keyword>
<keyword id="KW-1133">Transmembrane helix</keyword>
<gene>
    <name type="primary">ATG15</name>
    <name type="ORF">UMAG_00271</name>
</gene>
<dbReference type="EC" id="3.1.1.3"/>
<dbReference type="EMBL" id="CM003140">
    <property type="protein sequence ID" value="KIS71842.1"/>
    <property type="molecule type" value="Genomic_DNA"/>
</dbReference>
<dbReference type="RefSeq" id="XP_011386188.1">
    <property type="nucleotide sequence ID" value="XM_011387886.1"/>
</dbReference>
<dbReference type="FunCoup" id="Q4PHZ2">
    <property type="interactions" value="50"/>
</dbReference>
<dbReference type="STRING" id="237631.Q4PHZ2"/>
<dbReference type="ESTHER" id="ustma-q4phz2">
    <property type="family name" value="ATG15-related-lipase"/>
</dbReference>
<dbReference type="GlyCosmos" id="Q4PHZ2">
    <property type="glycosylation" value="3 sites, No reported glycans"/>
</dbReference>
<dbReference type="EnsemblFungi" id="KIS71842">
    <property type="protein sequence ID" value="KIS71842"/>
    <property type="gene ID" value="UMAG_00271"/>
</dbReference>
<dbReference type="GeneID" id="23561621"/>
<dbReference type="KEGG" id="uma:UMAG_00271"/>
<dbReference type="VEuPathDB" id="FungiDB:UMAG_00271"/>
<dbReference type="eggNOG" id="KOG4540">
    <property type="taxonomic scope" value="Eukaryota"/>
</dbReference>
<dbReference type="HOGENOM" id="CLU_028295_1_1_1"/>
<dbReference type="InParanoid" id="Q4PHZ2"/>
<dbReference type="OMA" id="NANIWIV"/>
<dbReference type="OrthoDB" id="58570at2759"/>
<dbReference type="Proteomes" id="UP000000561">
    <property type="component" value="Chromosome 1"/>
</dbReference>
<dbReference type="GO" id="GO:0005783">
    <property type="term" value="C:endoplasmic reticulum"/>
    <property type="evidence" value="ECO:0007669"/>
    <property type="project" value="EnsemblFungi"/>
</dbReference>
<dbReference type="GO" id="GO:0016020">
    <property type="term" value="C:membrane"/>
    <property type="evidence" value="ECO:0000318"/>
    <property type="project" value="GO_Central"/>
</dbReference>
<dbReference type="GO" id="GO:0032585">
    <property type="term" value="C:multivesicular body membrane"/>
    <property type="evidence" value="ECO:0007669"/>
    <property type="project" value="UniProtKB-SubCell"/>
</dbReference>
<dbReference type="GO" id="GO:0005775">
    <property type="term" value="C:vacuolar lumen"/>
    <property type="evidence" value="ECO:0000318"/>
    <property type="project" value="GO_Central"/>
</dbReference>
<dbReference type="GO" id="GO:0005774">
    <property type="term" value="C:vacuolar membrane"/>
    <property type="evidence" value="ECO:0007669"/>
    <property type="project" value="EnsemblFungi"/>
</dbReference>
<dbReference type="GO" id="GO:0004620">
    <property type="term" value="F:phospholipase activity"/>
    <property type="evidence" value="ECO:0000318"/>
    <property type="project" value="GO_Central"/>
</dbReference>
<dbReference type="GO" id="GO:0004806">
    <property type="term" value="F:triacylglycerol lipase activity"/>
    <property type="evidence" value="ECO:0007669"/>
    <property type="project" value="UniProtKB-EC"/>
</dbReference>
<dbReference type="GO" id="GO:0034496">
    <property type="term" value="P:multivesicular body membrane disassembly"/>
    <property type="evidence" value="ECO:0000318"/>
    <property type="project" value="GO_Central"/>
</dbReference>
<dbReference type="GO" id="GO:0046461">
    <property type="term" value="P:neutral lipid catabolic process"/>
    <property type="evidence" value="ECO:0000318"/>
    <property type="project" value="GO_Central"/>
</dbReference>
<dbReference type="GO" id="GO:0000425">
    <property type="term" value="P:pexophagy"/>
    <property type="evidence" value="ECO:0007669"/>
    <property type="project" value="EnsemblFungi"/>
</dbReference>
<dbReference type="GO" id="GO:0006660">
    <property type="term" value="P:phosphatidylserine catabolic process"/>
    <property type="evidence" value="ECO:0000318"/>
    <property type="project" value="GO_Central"/>
</dbReference>
<dbReference type="GO" id="GO:0034727">
    <property type="term" value="P:piecemeal microautophagy of the nucleus"/>
    <property type="evidence" value="ECO:0000318"/>
    <property type="project" value="GO_Central"/>
</dbReference>
<dbReference type="GO" id="GO:0006624">
    <property type="term" value="P:vacuolar protein processing"/>
    <property type="evidence" value="ECO:0007669"/>
    <property type="project" value="EnsemblFungi"/>
</dbReference>
<dbReference type="CDD" id="cd00519">
    <property type="entry name" value="Lipase_3"/>
    <property type="match status" value="1"/>
</dbReference>
<dbReference type="FunFam" id="3.40.50.1820:FF:000129">
    <property type="entry name" value="Autophagy related lipase Atg15, putative"/>
    <property type="match status" value="1"/>
</dbReference>
<dbReference type="Gene3D" id="3.40.50.1820">
    <property type="entry name" value="alpha/beta hydrolase"/>
    <property type="match status" value="1"/>
</dbReference>
<dbReference type="InterPro" id="IPR029058">
    <property type="entry name" value="AB_hydrolase_fold"/>
</dbReference>
<dbReference type="InterPro" id="IPR050805">
    <property type="entry name" value="ATG15_Lipase"/>
</dbReference>
<dbReference type="InterPro" id="IPR002921">
    <property type="entry name" value="Fungal_lipase-type"/>
</dbReference>
<dbReference type="PANTHER" id="PTHR47175">
    <property type="entry name" value="LIPASE ATG15-RELATED"/>
    <property type="match status" value="1"/>
</dbReference>
<dbReference type="PANTHER" id="PTHR47175:SF2">
    <property type="entry name" value="LIPASE ATG15-RELATED"/>
    <property type="match status" value="1"/>
</dbReference>
<dbReference type="Pfam" id="PF01764">
    <property type="entry name" value="Lipase_3"/>
    <property type="match status" value="1"/>
</dbReference>
<dbReference type="SUPFAM" id="SSF53474">
    <property type="entry name" value="alpha/beta-Hydrolases"/>
    <property type="match status" value="1"/>
</dbReference>
<dbReference type="PROSITE" id="PS00120">
    <property type="entry name" value="LIPASE_SER"/>
    <property type="match status" value="1"/>
</dbReference>
<evidence type="ECO:0000250" key="1"/>
<evidence type="ECO:0000250" key="2">
    <source>
        <dbReference type="UniProtKB" id="P25641"/>
    </source>
</evidence>
<evidence type="ECO:0000255" key="3"/>
<evidence type="ECO:0000255" key="4">
    <source>
        <dbReference type="PROSITE-ProRule" id="PRU10037"/>
    </source>
</evidence>
<evidence type="ECO:0000256" key="5">
    <source>
        <dbReference type="SAM" id="MobiDB-lite"/>
    </source>
</evidence>
<evidence type="ECO:0000305" key="6"/>